<sequence length="525" mass="59054">MPSNNLIKNALISVSDKKNIVEVAEKLIINKINLFSTGGTAQILKKNNIPVTEISDYTKFPEIMDGRVKTLHPKIMGGILGQKQKDQEIMKLYNICPIDIVIVNFYPFEKIKNIKKNDIDNVVNNIDIGGPTLVRASAKNYKNVIVIVDLDDFQSTIDSINNNTMNMEKRFNLASKAFEYTSYYEQIISQYFIEQNSLYKKTNNSLFPNEINFSFIKKQDLRYGENYHQKSSFYIEKNMCDSGTISTACQIQGKTLSYNNISDSDIALECVKQFTKPACVIVKHGNPCSVAVSHNILESYLSAYNSDPISAFGGIISFNCKLDEKTAQTIINQQFVEVIIIPEISKKAVKILQKKQNIRVLVTGKLQNNTVGLDLKKITNGLLVQEYDSHNIDYNSWSFVTKRSPTKKELKDSIFCWQVAKFVKSNAIVYGSDEITIGIGAGQMSRIYSTKLANIKVKDQGKNIIGATMASDAFFPFRDGIDEAASVGISSIIQPGGSIRDEEIIRAADEHNITMIFTKKRHFKH</sequence>
<evidence type="ECO:0000255" key="1">
    <source>
        <dbReference type="HAMAP-Rule" id="MF_00139"/>
    </source>
</evidence>
<evidence type="ECO:0000255" key="2">
    <source>
        <dbReference type="PROSITE-ProRule" id="PRU01202"/>
    </source>
</evidence>
<comment type="catalytic activity">
    <reaction evidence="1">
        <text>(6R)-10-formyltetrahydrofolate + 5-amino-1-(5-phospho-beta-D-ribosyl)imidazole-4-carboxamide = 5-formamido-1-(5-phospho-D-ribosyl)imidazole-4-carboxamide + (6S)-5,6,7,8-tetrahydrofolate</text>
        <dbReference type="Rhea" id="RHEA:22192"/>
        <dbReference type="ChEBI" id="CHEBI:57453"/>
        <dbReference type="ChEBI" id="CHEBI:58467"/>
        <dbReference type="ChEBI" id="CHEBI:58475"/>
        <dbReference type="ChEBI" id="CHEBI:195366"/>
        <dbReference type="EC" id="2.1.2.3"/>
    </reaction>
</comment>
<comment type="catalytic activity">
    <reaction evidence="1">
        <text>IMP + H2O = 5-formamido-1-(5-phospho-D-ribosyl)imidazole-4-carboxamide</text>
        <dbReference type="Rhea" id="RHEA:18445"/>
        <dbReference type="ChEBI" id="CHEBI:15377"/>
        <dbReference type="ChEBI" id="CHEBI:58053"/>
        <dbReference type="ChEBI" id="CHEBI:58467"/>
        <dbReference type="EC" id="3.5.4.10"/>
    </reaction>
</comment>
<comment type="pathway">
    <text evidence="1">Purine metabolism; IMP biosynthesis via de novo pathway; 5-formamido-1-(5-phospho-D-ribosyl)imidazole-4-carboxamide from 5-amino-1-(5-phospho-D-ribosyl)imidazole-4-carboxamide (10-formyl THF route): step 1/1.</text>
</comment>
<comment type="pathway">
    <text evidence="1">Purine metabolism; IMP biosynthesis via de novo pathway; IMP from 5-formamido-1-(5-phospho-D-ribosyl)imidazole-4-carboxamide: step 1/1.</text>
</comment>
<comment type="domain">
    <text evidence="1">The IMP cyclohydrolase activity resides in the N-terminal region.</text>
</comment>
<comment type="similarity">
    <text evidence="1">Belongs to the PurH family.</text>
</comment>
<name>PUR9_BUCAT</name>
<reference key="1">
    <citation type="journal article" date="2009" name="Science">
        <title>The dynamics and time scale of ongoing genomic erosion in symbiotic bacteria.</title>
        <authorList>
            <person name="Moran N.A."/>
            <person name="McLaughlin H.J."/>
            <person name="Sorek R."/>
        </authorList>
    </citation>
    <scope>NUCLEOTIDE SEQUENCE [LARGE SCALE GENOMIC DNA]</scope>
    <source>
        <strain>Tuc7</strain>
    </source>
</reference>
<feature type="chain" id="PRO_1000122951" description="Bifunctional purine biosynthesis protein PurH">
    <location>
        <begin position="1"/>
        <end position="525"/>
    </location>
</feature>
<feature type="domain" description="MGS-like" evidence="2">
    <location>
        <begin position="1"/>
        <end position="148"/>
    </location>
</feature>
<organism>
    <name type="scientific">Buchnera aphidicola subsp. Acyrthosiphon pisum (strain Tuc7)</name>
    <dbReference type="NCBI Taxonomy" id="561501"/>
    <lineage>
        <taxon>Bacteria</taxon>
        <taxon>Pseudomonadati</taxon>
        <taxon>Pseudomonadota</taxon>
        <taxon>Gammaproteobacteria</taxon>
        <taxon>Enterobacterales</taxon>
        <taxon>Erwiniaceae</taxon>
        <taxon>Buchnera</taxon>
    </lineage>
</organism>
<dbReference type="EC" id="2.1.2.3" evidence="1"/>
<dbReference type="EC" id="3.5.4.10" evidence="1"/>
<dbReference type="EMBL" id="CP001158">
    <property type="protein sequence ID" value="ACL29862.1"/>
    <property type="molecule type" value="Genomic_DNA"/>
</dbReference>
<dbReference type="RefSeq" id="WP_010895909.1">
    <property type="nucleotide sequence ID" value="NC_011834.1"/>
</dbReference>
<dbReference type="SMR" id="B8D6U7"/>
<dbReference type="KEGG" id="bau:BUAPTUC7_031"/>
<dbReference type="HOGENOM" id="CLU_016316_5_2_6"/>
<dbReference type="UniPathway" id="UPA00074">
    <property type="reaction ID" value="UER00133"/>
</dbReference>
<dbReference type="UniPathway" id="UPA00074">
    <property type="reaction ID" value="UER00135"/>
</dbReference>
<dbReference type="GO" id="GO:0005829">
    <property type="term" value="C:cytosol"/>
    <property type="evidence" value="ECO:0007669"/>
    <property type="project" value="TreeGrafter"/>
</dbReference>
<dbReference type="GO" id="GO:0003937">
    <property type="term" value="F:IMP cyclohydrolase activity"/>
    <property type="evidence" value="ECO:0007669"/>
    <property type="project" value="UniProtKB-UniRule"/>
</dbReference>
<dbReference type="GO" id="GO:0004643">
    <property type="term" value="F:phosphoribosylaminoimidazolecarboxamide formyltransferase activity"/>
    <property type="evidence" value="ECO:0007669"/>
    <property type="project" value="UniProtKB-UniRule"/>
</dbReference>
<dbReference type="GO" id="GO:0006189">
    <property type="term" value="P:'de novo' IMP biosynthetic process"/>
    <property type="evidence" value="ECO:0007669"/>
    <property type="project" value="UniProtKB-UniRule"/>
</dbReference>
<dbReference type="CDD" id="cd01421">
    <property type="entry name" value="IMPCH"/>
    <property type="match status" value="1"/>
</dbReference>
<dbReference type="FunFam" id="3.40.140.20:FF:000001">
    <property type="entry name" value="Bifunctional purine biosynthesis protein PurH"/>
    <property type="match status" value="1"/>
</dbReference>
<dbReference type="FunFam" id="3.40.140.20:FF:000002">
    <property type="entry name" value="Bifunctional purine biosynthesis protein PurH"/>
    <property type="match status" value="1"/>
</dbReference>
<dbReference type="FunFam" id="3.40.50.1380:FF:000001">
    <property type="entry name" value="Bifunctional purine biosynthesis protein PurH"/>
    <property type="match status" value="1"/>
</dbReference>
<dbReference type="Gene3D" id="3.40.140.20">
    <property type="match status" value="2"/>
</dbReference>
<dbReference type="Gene3D" id="3.40.50.1380">
    <property type="entry name" value="Methylglyoxal synthase-like domain"/>
    <property type="match status" value="1"/>
</dbReference>
<dbReference type="HAMAP" id="MF_00139">
    <property type="entry name" value="PurH"/>
    <property type="match status" value="1"/>
</dbReference>
<dbReference type="InterPro" id="IPR024051">
    <property type="entry name" value="AICAR_Tfase_dup_dom_sf"/>
</dbReference>
<dbReference type="InterPro" id="IPR016193">
    <property type="entry name" value="Cytidine_deaminase-like"/>
</dbReference>
<dbReference type="InterPro" id="IPR011607">
    <property type="entry name" value="MGS-like_dom"/>
</dbReference>
<dbReference type="InterPro" id="IPR036914">
    <property type="entry name" value="MGS-like_dom_sf"/>
</dbReference>
<dbReference type="InterPro" id="IPR002695">
    <property type="entry name" value="PurH-like"/>
</dbReference>
<dbReference type="NCBIfam" id="NF002049">
    <property type="entry name" value="PRK00881.1"/>
    <property type="match status" value="1"/>
</dbReference>
<dbReference type="NCBIfam" id="TIGR00355">
    <property type="entry name" value="purH"/>
    <property type="match status" value="1"/>
</dbReference>
<dbReference type="PANTHER" id="PTHR11692:SF0">
    <property type="entry name" value="BIFUNCTIONAL PURINE BIOSYNTHESIS PROTEIN ATIC"/>
    <property type="match status" value="1"/>
</dbReference>
<dbReference type="PANTHER" id="PTHR11692">
    <property type="entry name" value="BIFUNCTIONAL PURINE BIOSYNTHESIS PROTEIN PURH"/>
    <property type="match status" value="1"/>
</dbReference>
<dbReference type="Pfam" id="PF01808">
    <property type="entry name" value="AICARFT_IMPCHas"/>
    <property type="match status" value="1"/>
</dbReference>
<dbReference type="Pfam" id="PF02142">
    <property type="entry name" value="MGS"/>
    <property type="match status" value="1"/>
</dbReference>
<dbReference type="PIRSF" id="PIRSF000414">
    <property type="entry name" value="AICARFT_IMPCHas"/>
    <property type="match status" value="1"/>
</dbReference>
<dbReference type="SMART" id="SM00798">
    <property type="entry name" value="AICARFT_IMPCHas"/>
    <property type="match status" value="1"/>
</dbReference>
<dbReference type="SMART" id="SM00851">
    <property type="entry name" value="MGS"/>
    <property type="match status" value="1"/>
</dbReference>
<dbReference type="SUPFAM" id="SSF53927">
    <property type="entry name" value="Cytidine deaminase-like"/>
    <property type="match status" value="1"/>
</dbReference>
<dbReference type="SUPFAM" id="SSF52335">
    <property type="entry name" value="Methylglyoxal synthase-like"/>
    <property type="match status" value="1"/>
</dbReference>
<dbReference type="PROSITE" id="PS51855">
    <property type="entry name" value="MGS"/>
    <property type="match status" value="1"/>
</dbReference>
<gene>
    <name evidence="1" type="primary">purH</name>
    <name type="ordered locus">BUAPTUC7_031</name>
</gene>
<protein>
    <recommendedName>
        <fullName evidence="1">Bifunctional purine biosynthesis protein PurH</fullName>
    </recommendedName>
    <domain>
        <recommendedName>
            <fullName evidence="1">Phosphoribosylaminoimidazolecarboxamide formyltransferase</fullName>
            <ecNumber evidence="1">2.1.2.3</ecNumber>
        </recommendedName>
        <alternativeName>
            <fullName evidence="1">AICAR transformylase</fullName>
        </alternativeName>
    </domain>
    <domain>
        <recommendedName>
            <fullName evidence="1">IMP cyclohydrolase</fullName>
            <ecNumber evidence="1">3.5.4.10</ecNumber>
        </recommendedName>
        <alternativeName>
            <fullName evidence="1">ATIC</fullName>
        </alternativeName>
        <alternativeName>
            <fullName evidence="1">IMP synthase</fullName>
        </alternativeName>
        <alternativeName>
            <fullName evidence="1">Inosinicase</fullName>
        </alternativeName>
    </domain>
</protein>
<keyword id="KW-0378">Hydrolase</keyword>
<keyword id="KW-0511">Multifunctional enzyme</keyword>
<keyword id="KW-0658">Purine biosynthesis</keyword>
<keyword id="KW-0808">Transferase</keyword>
<accession>B8D6U7</accession>
<proteinExistence type="inferred from homology"/>